<gene>
    <name evidence="1" type="primary">iscS</name>
    <name type="ordered locus">Swoo_1776</name>
</gene>
<evidence type="ECO:0000255" key="1">
    <source>
        <dbReference type="HAMAP-Rule" id="MF_00331"/>
    </source>
</evidence>
<sequence>MKLPIYLDYAATTPVDPRVAEKMMQCMTMDGIFGNPASRSHRYGWQAEEAVDIARNQVADLINADPREIVFTSGATESDNLAIKGVAHFYQKKGKHIITSKTEHKAVLDTCRQLEREGFEVTYLAPEANGLIPLATIESAMREDTVLVSIMHVNNEIGVIHDINAIGELCRSKKIIFHVDAAQSAGKLPLDVQETKVDLLSISAHKMYGPKGIGALYVRRKPRIRLEAAMHGGGHERGMRSGTLATHQIVGMGEAAAIAKADMEADNARIAGLRDRLWNGVKGIEETYINGDVEQRYCGSLNVSFNFVEGESLMMALKDLAVSSGSACTSASLEPSYVLRALGLNDEMAHSSIRFSIGRFTTEEEIDHAIETINKSIDSLRDMSPLWEMFKDGVDLEQVQWAHH</sequence>
<name>ISCS_SHEWM</name>
<feature type="chain" id="PRO_1000119649" description="Cysteine desulfurase IscS">
    <location>
        <begin position="1"/>
        <end position="404"/>
    </location>
</feature>
<feature type="active site" description="Cysteine persulfide intermediate" evidence="1">
    <location>
        <position position="328"/>
    </location>
</feature>
<feature type="binding site" evidence="1">
    <location>
        <begin position="75"/>
        <end position="76"/>
    </location>
    <ligand>
        <name>pyridoxal 5'-phosphate</name>
        <dbReference type="ChEBI" id="CHEBI:597326"/>
    </ligand>
</feature>
<feature type="binding site" evidence="1">
    <location>
        <position position="155"/>
    </location>
    <ligand>
        <name>pyridoxal 5'-phosphate</name>
        <dbReference type="ChEBI" id="CHEBI:597326"/>
    </ligand>
</feature>
<feature type="binding site" evidence="1">
    <location>
        <position position="183"/>
    </location>
    <ligand>
        <name>pyridoxal 5'-phosphate</name>
        <dbReference type="ChEBI" id="CHEBI:597326"/>
    </ligand>
</feature>
<feature type="binding site" evidence="1">
    <location>
        <begin position="203"/>
        <end position="205"/>
    </location>
    <ligand>
        <name>pyridoxal 5'-phosphate</name>
        <dbReference type="ChEBI" id="CHEBI:597326"/>
    </ligand>
</feature>
<feature type="binding site" evidence="1">
    <location>
        <position position="243"/>
    </location>
    <ligand>
        <name>pyridoxal 5'-phosphate</name>
        <dbReference type="ChEBI" id="CHEBI:597326"/>
    </ligand>
</feature>
<feature type="binding site" description="via persulfide group" evidence="1">
    <location>
        <position position="328"/>
    </location>
    <ligand>
        <name>[2Fe-2S] cluster</name>
        <dbReference type="ChEBI" id="CHEBI:190135"/>
        <note>ligand shared with IscU</note>
    </ligand>
</feature>
<feature type="modified residue" description="N6-(pyridoxal phosphate)lysine" evidence="1">
    <location>
        <position position="206"/>
    </location>
</feature>
<dbReference type="EC" id="2.8.1.7" evidence="1"/>
<dbReference type="EMBL" id="CP000961">
    <property type="protein sequence ID" value="ACA86060.1"/>
    <property type="molecule type" value="Genomic_DNA"/>
</dbReference>
<dbReference type="RefSeq" id="WP_012324406.1">
    <property type="nucleotide sequence ID" value="NC_010506.1"/>
</dbReference>
<dbReference type="SMR" id="B1KNI3"/>
<dbReference type="STRING" id="392500.Swoo_1776"/>
<dbReference type="KEGG" id="swd:Swoo_1776"/>
<dbReference type="eggNOG" id="COG1104">
    <property type="taxonomic scope" value="Bacteria"/>
</dbReference>
<dbReference type="HOGENOM" id="CLU_003433_0_2_6"/>
<dbReference type="UniPathway" id="UPA00266"/>
<dbReference type="Proteomes" id="UP000002168">
    <property type="component" value="Chromosome"/>
</dbReference>
<dbReference type="GO" id="GO:1990221">
    <property type="term" value="C:L-cysteine desulfurase complex"/>
    <property type="evidence" value="ECO:0007669"/>
    <property type="project" value="UniProtKB-ARBA"/>
</dbReference>
<dbReference type="GO" id="GO:0051537">
    <property type="term" value="F:2 iron, 2 sulfur cluster binding"/>
    <property type="evidence" value="ECO:0007669"/>
    <property type="project" value="UniProtKB-UniRule"/>
</dbReference>
<dbReference type="GO" id="GO:0031071">
    <property type="term" value="F:cysteine desulfurase activity"/>
    <property type="evidence" value="ECO:0007669"/>
    <property type="project" value="UniProtKB-UniRule"/>
</dbReference>
<dbReference type="GO" id="GO:0046872">
    <property type="term" value="F:metal ion binding"/>
    <property type="evidence" value="ECO:0007669"/>
    <property type="project" value="UniProtKB-KW"/>
</dbReference>
<dbReference type="GO" id="GO:0030170">
    <property type="term" value="F:pyridoxal phosphate binding"/>
    <property type="evidence" value="ECO:0007669"/>
    <property type="project" value="UniProtKB-UniRule"/>
</dbReference>
<dbReference type="GO" id="GO:0044571">
    <property type="term" value="P:[2Fe-2S] cluster assembly"/>
    <property type="evidence" value="ECO:0007669"/>
    <property type="project" value="UniProtKB-UniRule"/>
</dbReference>
<dbReference type="FunFam" id="3.40.640.10:FF:000003">
    <property type="entry name" value="Cysteine desulfurase IscS"/>
    <property type="match status" value="1"/>
</dbReference>
<dbReference type="FunFam" id="3.90.1150.10:FF:000002">
    <property type="entry name" value="Cysteine desulfurase IscS"/>
    <property type="match status" value="1"/>
</dbReference>
<dbReference type="Gene3D" id="3.90.1150.10">
    <property type="entry name" value="Aspartate Aminotransferase, domain 1"/>
    <property type="match status" value="1"/>
</dbReference>
<dbReference type="Gene3D" id="3.40.640.10">
    <property type="entry name" value="Type I PLP-dependent aspartate aminotransferase-like (Major domain)"/>
    <property type="match status" value="1"/>
</dbReference>
<dbReference type="HAMAP" id="MF_00331">
    <property type="entry name" value="Cys_desulf_IscS"/>
    <property type="match status" value="1"/>
</dbReference>
<dbReference type="InterPro" id="IPR000192">
    <property type="entry name" value="Aminotrans_V_dom"/>
</dbReference>
<dbReference type="InterPro" id="IPR020578">
    <property type="entry name" value="Aminotrans_V_PyrdxlP_BS"/>
</dbReference>
<dbReference type="InterPro" id="IPR010240">
    <property type="entry name" value="Cys_deSase_IscS"/>
</dbReference>
<dbReference type="InterPro" id="IPR016454">
    <property type="entry name" value="Cysteine_dSase"/>
</dbReference>
<dbReference type="InterPro" id="IPR015424">
    <property type="entry name" value="PyrdxlP-dep_Trfase"/>
</dbReference>
<dbReference type="InterPro" id="IPR015421">
    <property type="entry name" value="PyrdxlP-dep_Trfase_major"/>
</dbReference>
<dbReference type="InterPro" id="IPR015422">
    <property type="entry name" value="PyrdxlP-dep_Trfase_small"/>
</dbReference>
<dbReference type="NCBIfam" id="TIGR02006">
    <property type="entry name" value="IscS"/>
    <property type="match status" value="1"/>
</dbReference>
<dbReference type="NCBIfam" id="NF002806">
    <property type="entry name" value="PRK02948.1"/>
    <property type="match status" value="1"/>
</dbReference>
<dbReference type="NCBIfam" id="NF010611">
    <property type="entry name" value="PRK14012.1"/>
    <property type="match status" value="1"/>
</dbReference>
<dbReference type="PANTHER" id="PTHR11601:SF34">
    <property type="entry name" value="CYSTEINE DESULFURASE"/>
    <property type="match status" value="1"/>
</dbReference>
<dbReference type="PANTHER" id="PTHR11601">
    <property type="entry name" value="CYSTEINE DESULFURYLASE FAMILY MEMBER"/>
    <property type="match status" value="1"/>
</dbReference>
<dbReference type="Pfam" id="PF00266">
    <property type="entry name" value="Aminotran_5"/>
    <property type="match status" value="1"/>
</dbReference>
<dbReference type="PIRSF" id="PIRSF005572">
    <property type="entry name" value="NifS"/>
    <property type="match status" value="1"/>
</dbReference>
<dbReference type="SUPFAM" id="SSF53383">
    <property type="entry name" value="PLP-dependent transferases"/>
    <property type="match status" value="1"/>
</dbReference>
<dbReference type="PROSITE" id="PS00595">
    <property type="entry name" value="AA_TRANSFER_CLASS_5"/>
    <property type="match status" value="1"/>
</dbReference>
<reference key="1">
    <citation type="submission" date="2008-02" db="EMBL/GenBank/DDBJ databases">
        <title>Complete sequence of Shewanella woodyi ATCC 51908.</title>
        <authorList>
            <consortium name="US DOE Joint Genome Institute"/>
            <person name="Copeland A."/>
            <person name="Lucas S."/>
            <person name="Lapidus A."/>
            <person name="Glavina del Rio T."/>
            <person name="Dalin E."/>
            <person name="Tice H."/>
            <person name="Bruce D."/>
            <person name="Goodwin L."/>
            <person name="Pitluck S."/>
            <person name="Sims D."/>
            <person name="Brettin T."/>
            <person name="Detter J.C."/>
            <person name="Han C."/>
            <person name="Kuske C.R."/>
            <person name="Schmutz J."/>
            <person name="Larimer F."/>
            <person name="Land M."/>
            <person name="Hauser L."/>
            <person name="Kyrpides N."/>
            <person name="Lykidis A."/>
            <person name="Zhao J.-S."/>
            <person name="Richardson P."/>
        </authorList>
    </citation>
    <scope>NUCLEOTIDE SEQUENCE [LARGE SCALE GENOMIC DNA]</scope>
    <source>
        <strain>ATCC 51908 / MS32</strain>
    </source>
</reference>
<proteinExistence type="inferred from homology"/>
<protein>
    <recommendedName>
        <fullName evidence="1">Cysteine desulfurase IscS</fullName>
        <ecNumber evidence="1">2.8.1.7</ecNumber>
    </recommendedName>
</protein>
<accession>B1KNI3</accession>
<organism>
    <name type="scientific">Shewanella woodyi (strain ATCC 51908 / MS32)</name>
    <dbReference type="NCBI Taxonomy" id="392500"/>
    <lineage>
        <taxon>Bacteria</taxon>
        <taxon>Pseudomonadati</taxon>
        <taxon>Pseudomonadota</taxon>
        <taxon>Gammaproteobacteria</taxon>
        <taxon>Alteromonadales</taxon>
        <taxon>Shewanellaceae</taxon>
        <taxon>Shewanella</taxon>
    </lineage>
</organism>
<comment type="function">
    <text evidence="1">Master enzyme that delivers sulfur to a number of partners involved in Fe-S cluster assembly, tRNA modification or cofactor biosynthesis. Catalyzes the removal of elemental sulfur atoms from cysteine to produce alanine. Functions as a sulfur delivery protein for Fe-S cluster synthesis onto IscU, an Fe-S scaffold assembly protein, as well as other S acceptor proteins.</text>
</comment>
<comment type="catalytic activity">
    <reaction evidence="1">
        <text>(sulfur carrier)-H + L-cysteine = (sulfur carrier)-SH + L-alanine</text>
        <dbReference type="Rhea" id="RHEA:43892"/>
        <dbReference type="Rhea" id="RHEA-COMP:14737"/>
        <dbReference type="Rhea" id="RHEA-COMP:14739"/>
        <dbReference type="ChEBI" id="CHEBI:29917"/>
        <dbReference type="ChEBI" id="CHEBI:35235"/>
        <dbReference type="ChEBI" id="CHEBI:57972"/>
        <dbReference type="ChEBI" id="CHEBI:64428"/>
        <dbReference type="EC" id="2.8.1.7"/>
    </reaction>
</comment>
<comment type="cofactor">
    <cofactor evidence="1">
        <name>pyridoxal 5'-phosphate</name>
        <dbReference type="ChEBI" id="CHEBI:597326"/>
    </cofactor>
</comment>
<comment type="pathway">
    <text evidence="1">Cofactor biosynthesis; iron-sulfur cluster biosynthesis.</text>
</comment>
<comment type="subunit">
    <text evidence="1">Homodimer. Forms a heterotetramer with IscU, interacts with other sulfur acceptors.</text>
</comment>
<comment type="subcellular location">
    <subcellularLocation>
        <location evidence="1">Cytoplasm</location>
    </subcellularLocation>
</comment>
<comment type="similarity">
    <text evidence="1">Belongs to the class-V pyridoxal-phosphate-dependent aminotransferase family. NifS/IscS subfamily.</text>
</comment>
<keyword id="KW-0001">2Fe-2S</keyword>
<keyword id="KW-0963">Cytoplasm</keyword>
<keyword id="KW-0408">Iron</keyword>
<keyword id="KW-0411">Iron-sulfur</keyword>
<keyword id="KW-0479">Metal-binding</keyword>
<keyword id="KW-0663">Pyridoxal phosphate</keyword>
<keyword id="KW-1185">Reference proteome</keyword>
<keyword id="KW-0808">Transferase</keyword>